<organism>
    <name type="scientific">Yersinia pestis (strain Pestoides F)</name>
    <dbReference type="NCBI Taxonomy" id="386656"/>
    <lineage>
        <taxon>Bacteria</taxon>
        <taxon>Pseudomonadati</taxon>
        <taxon>Pseudomonadota</taxon>
        <taxon>Gammaproteobacteria</taxon>
        <taxon>Enterobacterales</taxon>
        <taxon>Yersiniaceae</taxon>
        <taxon>Yersinia</taxon>
    </lineage>
</organism>
<protein>
    <recommendedName>
        <fullName evidence="1">Acetyl-coenzyme A carboxylase carboxyl transferase subunit alpha</fullName>
        <shortName evidence="1">ACCase subunit alpha</shortName>
        <shortName evidence="1">Acetyl-CoA carboxylase carboxyltransferase subunit alpha</shortName>
        <ecNumber evidence="1">2.1.3.15</ecNumber>
    </recommendedName>
</protein>
<name>ACCA_YERPP</name>
<reference key="1">
    <citation type="submission" date="2007-02" db="EMBL/GenBank/DDBJ databases">
        <title>Complete sequence of chromosome of Yersinia pestis Pestoides F.</title>
        <authorList>
            <consortium name="US DOE Joint Genome Institute"/>
            <person name="Copeland A."/>
            <person name="Lucas S."/>
            <person name="Lapidus A."/>
            <person name="Barry K."/>
            <person name="Detter J.C."/>
            <person name="Glavina del Rio T."/>
            <person name="Hammon N."/>
            <person name="Israni S."/>
            <person name="Dalin E."/>
            <person name="Tice H."/>
            <person name="Pitluck S."/>
            <person name="Di Bartolo G."/>
            <person name="Chain P."/>
            <person name="Malfatti S."/>
            <person name="Shin M."/>
            <person name="Vergez L."/>
            <person name="Schmutz J."/>
            <person name="Larimer F."/>
            <person name="Land M."/>
            <person name="Hauser L."/>
            <person name="Worsham P."/>
            <person name="Chu M."/>
            <person name="Bearden S."/>
            <person name="Garcia E."/>
            <person name="Richardson P."/>
        </authorList>
    </citation>
    <scope>NUCLEOTIDE SEQUENCE [LARGE SCALE GENOMIC DNA]</scope>
    <source>
        <strain>Pestoides F</strain>
    </source>
</reference>
<proteinExistence type="inferred from homology"/>
<sequence length="319" mass="35496">MSLNFLDFEQPIAELEAKIDSLTAVSRQDEKLDINLDEEVQRLREKSVELTRKIFSDLGAWQIAQLARHPRRPYTLDYIANIFTDFEELAGDRAYADDKAIVGGIARLDGRPVMIIGHQKGRETKEKIRRNFGMPAPEGYRKALRLMEMAERFKLPIITFIDTPGAYPGVGAEERGQSEAIARNLREMSRLNVPIVCTVIGEGGSGGALAIGVGDKVNMLQYSTYSVISPEGCASILWKSADKAPLAAEAMGITAHRLKELKMIDSVIPEPLGGAHRDYAAIAISLKAQLLADLNDLDVLNDEELLNRRYQRLMNYGYC</sequence>
<evidence type="ECO:0000255" key="1">
    <source>
        <dbReference type="HAMAP-Rule" id="MF_00823"/>
    </source>
</evidence>
<evidence type="ECO:0000255" key="2">
    <source>
        <dbReference type="PROSITE-ProRule" id="PRU01137"/>
    </source>
</evidence>
<dbReference type="EC" id="2.1.3.15" evidence="1"/>
<dbReference type="EMBL" id="CP000668">
    <property type="protein sequence ID" value="ABP40037.1"/>
    <property type="molecule type" value="Genomic_DNA"/>
</dbReference>
<dbReference type="RefSeq" id="WP_002212147.1">
    <property type="nucleotide sequence ID" value="NZ_CP009715.1"/>
</dbReference>
<dbReference type="SMR" id="A4TL75"/>
<dbReference type="GeneID" id="57977501"/>
<dbReference type="KEGG" id="ypp:YPDSF_1652"/>
<dbReference type="PATRIC" id="fig|386656.14.peg.2110"/>
<dbReference type="UniPathway" id="UPA00655">
    <property type="reaction ID" value="UER00711"/>
</dbReference>
<dbReference type="GO" id="GO:0009317">
    <property type="term" value="C:acetyl-CoA carboxylase complex"/>
    <property type="evidence" value="ECO:0007669"/>
    <property type="project" value="InterPro"/>
</dbReference>
<dbReference type="GO" id="GO:0003989">
    <property type="term" value="F:acetyl-CoA carboxylase activity"/>
    <property type="evidence" value="ECO:0007669"/>
    <property type="project" value="InterPro"/>
</dbReference>
<dbReference type="GO" id="GO:0005524">
    <property type="term" value="F:ATP binding"/>
    <property type="evidence" value="ECO:0007669"/>
    <property type="project" value="UniProtKB-KW"/>
</dbReference>
<dbReference type="GO" id="GO:0016743">
    <property type="term" value="F:carboxyl- or carbamoyltransferase activity"/>
    <property type="evidence" value="ECO:0007669"/>
    <property type="project" value="UniProtKB-UniRule"/>
</dbReference>
<dbReference type="GO" id="GO:0006633">
    <property type="term" value="P:fatty acid biosynthetic process"/>
    <property type="evidence" value="ECO:0007669"/>
    <property type="project" value="UniProtKB-KW"/>
</dbReference>
<dbReference type="GO" id="GO:2001295">
    <property type="term" value="P:malonyl-CoA biosynthetic process"/>
    <property type="evidence" value="ECO:0007669"/>
    <property type="project" value="UniProtKB-UniRule"/>
</dbReference>
<dbReference type="FunFam" id="3.90.226.10:FF:000008">
    <property type="entry name" value="Acetyl-coenzyme A carboxylase carboxyl transferase subunit alpha"/>
    <property type="match status" value="1"/>
</dbReference>
<dbReference type="Gene3D" id="3.90.226.10">
    <property type="entry name" value="2-enoyl-CoA Hydratase, Chain A, domain 1"/>
    <property type="match status" value="1"/>
</dbReference>
<dbReference type="HAMAP" id="MF_00823">
    <property type="entry name" value="AcetylCoA_CT_alpha"/>
    <property type="match status" value="1"/>
</dbReference>
<dbReference type="InterPro" id="IPR001095">
    <property type="entry name" value="Acetyl_CoA_COase_a_su"/>
</dbReference>
<dbReference type="InterPro" id="IPR029045">
    <property type="entry name" value="ClpP/crotonase-like_dom_sf"/>
</dbReference>
<dbReference type="InterPro" id="IPR011763">
    <property type="entry name" value="COA_CT_C"/>
</dbReference>
<dbReference type="NCBIfam" id="TIGR00513">
    <property type="entry name" value="accA"/>
    <property type="match status" value="1"/>
</dbReference>
<dbReference type="NCBIfam" id="NF041504">
    <property type="entry name" value="AccA_sub"/>
    <property type="match status" value="1"/>
</dbReference>
<dbReference type="NCBIfam" id="NF004344">
    <property type="entry name" value="PRK05724.1"/>
    <property type="match status" value="1"/>
</dbReference>
<dbReference type="PANTHER" id="PTHR42853">
    <property type="entry name" value="ACETYL-COENZYME A CARBOXYLASE CARBOXYL TRANSFERASE SUBUNIT ALPHA"/>
    <property type="match status" value="1"/>
</dbReference>
<dbReference type="PANTHER" id="PTHR42853:SF3">
    <property type="entry name" value="ACETYL-COENZYME A CARBOXYLASE CARBOXYL TRANSFERASE SUBUNIT ALPHA, CHLOROPLASTIC"/>
    <property type="match status" value="1"/>
</dbReference>
<dbReference type="Pfam" id="PF03255">
    <property type="entry name" value="ACCA"/>
    <property type="match status" value="1"/>
</dbReference>
<dbReference type="PRINTS" id="PR01069">
    <property type="entry name" value="ACCCTRFRASEA"/>
</dbReference>
<dbReference type="SUPFAM" id="SSF52096">
    <property type="entry name" value="ClpP/crotonase"/>
    <property type="match status" value="1"/>
</dbReference>
<dbReference type="PROSITE" id="PS50989">
    <property type="entry name" value="COA_CT_CTER"/>
    <property type="match status" value="1"/>
</dbReference>
<accession>A4TL75</accession>
<comment type="function">
    <text evidence="1">Component of the acetyl coenzyme A carboxylase (ACC) complex. First, biotin carboxylase catalyzes the carboxylation of biotin on its carrier protein (BCCP) and then the CO(2) group is transferred by the carboxyltransferase to acetyl-CoA to form malonyl-CoA.</text>
</comment>
<comment type="catalytic activity">
    <reaction evidence="1">
        <text>N(6)-carboxybiotinyl-L-lysyl-[protein] + acetyl-CoA = N(6)-biotinyl-L-lysyl-[protein] + malonyl-CoA</text>
        <dbReference type="Rhea" id="RHEA:54728"/>
        <dbReference type="Rhea" id="RHEA-COMP:10505"/>
        <dbReference type="Rhea" id="RHEA-COMP:10506"/>
        <dbReference type="ChEBI" id="CHEBI:57288"/>
        <dbReference type="ChEBI" id="CHEBI:57384"/>
        <dbReference type="ChEBI" id="CHEBI:83144"/>
        <dbReference type="ChEBI" id="CHEBI:83145"/>
        <dbReference type="EC" id="2.1.3.15"/>
    </reaction>
</comment>
<comment type="pathway">
    <text evidence="1">Lipid metabolism; malonyl-CoA biosynthesis; malonyl-CoA from acetyl-CoA: step 1/1.</text>
</comment>
<comment type="subunit">
    <text evidence="1">Acetyl-CoA carboxylase is a heterohexamer composed of biotin carboxyl carrier protein (AccB), biotin carboxylase (AccC) and two subunits each of ACCase subunit alpha (AccA) and ACCase subunit beta (AccD).</text>
</comment>
<comment type="subcellular location">
    <subcellularLocation>
        <location evidence="1">Cytoplasm</location>
    </subcellularLocation>
</comment>
<comment type="similarity">
    <text evidence="1">Belongs to the AccA family.</text>
</comment>
<feature type="chain" id="PRO_1000062703" description="Acetyl-coenzyme A carboxylase carboxyl transferase subunit alpha">
    <location>
        <begin position="1"/>
        <end position="319"/>
    </location>
</feature>
<feature type="domain" description="CoA carboxyltransferase C-terminal" evidence="2">
    <location>
        <begin position="35"/>
        <end position="296"/>
    </location>
</feature>
<keyword id="KW-0067">ATP-binding</keyword>
<keyword id="KW-0963">Cytoplasm</keyword>
<keyword id="KW-0275">Fatty acid biosynthesis</keyword>
<keyword id="KW-0276">Fatty acid metabolism</keyword>
<keyword id="KW-0444">Lipid biosynthesis</keyword>
<keyword id="KW-0443">Lipid metabolism</keyword>
<keyword id="KW-0547">Nucleotide-binding</keyword>
<keyword id="KW-0808">Transferase</keyword>
<gene>
    <name evidence="1" type="primary">accA</name>
    <name type="ordered locus">YPDSF_1652</name>
</gene>